<evidence type="ECO:0000255" key="1">
    <source>
        <dbReference type="HAMAP-Rule" id="MF_01008"/>
    </source>
</evidence>
<evidence type="ECO:0000255" key="2">
    <source>
        <dbReference type="PROSITE-ProRule" id="PRU01076"/>
    </source>
</evidence>
<proteinExistence type="inferred from homology"/>
<reference key="1">
    <citation type="journal article" date="2004" name="Nat. Biotechnol.">
        <title>The genome sequence of the extreme thermophile Thermus thermophilus.</title>
        <authorList>
            <person name="Henne A."/>
            <person name="Brueggemann H."/>
            <person name="Raasch C."/>
            <person name="Wiezer A."/>
            <person name="Hartsch T."/>
            <person name="Liesegang H."/>
            <person name="Johann A."/>
            <person name="Lienard T."/>
            <person name="Gohl O."/>
            <person name="Martinez-Arias R."/>
            <person name="Jacobi C."/>
            <person name="Starkuviene V."/>
            <person name="Schlenczeck S."/>
            <person name="Dencker S."/>
            <person name="Huber R."/>
            <person name="Klenk H.-P."/>
            <person name="Kramer W."/>
            <person name="Merkl R."/>
            <person name="Gottschalk G."/>
            <person name="Fritz H.-J."/>
        </authorList>
    </citation>
    <scope>NUCLEOTIDE SEQUENCE [LARGE SCALE GENOMIC DNA]</scope>
    <source>
        <strain>ATCC BAA-163 / DSM 7039 / HB27</strain>
    </source>
</reference>
<gene>
    <name evidence="1" type="primary">mraZ</name>
    <name type="ordered locus">TT_C0710</name>
</gene>
<dbReference type="EMBL" id="AE017221">
    <property type="protein sequence ID" value="AAS81058.1"/>
    <property type="molecule type" value="Genomic_DNA"/>
</dbReference>
<dbReference type="RefSeq" id="WP_008632499.1">
    <property type="nucleotide sequence ID" value="NC_005835.1"/>
</dbReference>
<dbReference type="SMR" id="Q72JQ8"/>
<dbReference type="GeneID" id="3168807"/>
<dbReference type="KEGG" id="tth:TT_C0710"/>
<dbReference type="eggNOG" id="COG2001">
    <property type="taxonomic scope" value="Bacteria"/>
</dbReference>
<dbReference type="HOGENOM" id="CLU_107907_0_3_0"/>
<dbReference type="OrthoDB" id="9807753at2"/>
<dbReference type="Proteomes" id="UP000000592">
    <property type="component" value="Chromosome"/>
</dbReference>
<dbReference type="GO" id="GO:0005737">
    <property type="term" value="C:cytoplasm"/>
    <property type="evidence" value="ECO:0007669"/>
    <property type="project" value="UniProtKB-UniRule"/>
</dbReference>
<dbReference type="GO" id="GO:0009295">
    <property type="term" value="C:nucleoid"/>
    <property type="evidence" value="ECO:0007669"/>
    <property type="project" value="UniProtKB-SubCell"/>
</dbReference>
<dbReference type="GO" id="GO:0003700">
    <property type="term" value="F:DNA-binding transcription factor activity"/>
    <property type="evidence" value="ECO:0007669"/>
    <property type="project" value="UniProtKB-UniRule"/>
</dbReference>
<dbReference type="GO" id="GO:0000976">
    <property type="term" value="F:transcription cis-regulatory region binding"/>
    <property type="evidence" value="ECO:0007669"/>
    <property type="project" value="TreeGrafter"/>
</dbReference>
<dbReference type="GO" id="GO:2000143">
    <property type="term" value="P:negative regulation of DNA-templated transcription initiation"/>
    <property type="evidence" value="ECO:0007669"/>
    <property type="project" value="TreeGrafter"/>
</dbReference>
<dbReference type="CDD" id="cd16321">
    <property type="entry name" value="MraZ_C"/>
    <property type="match status" value="1"/>
</dbReference>
<dbReference type="CDD" id="cd16320">
    <property type="entry name" value="MraZ_N"/>
    <property type="match status" value="1"/>
</dbReference>
<dbReference type="Gene3D" id="3.40.1550.20">
    <property type="entry name" value="Transcriptional regulator MraZ domain"/>
    <property type="match status" value="1"/>
</dbReference>
<dbReference type="HAMAP" id="MF_01008">
    <property type="entry name" value="MraZ"/>
    <property type="match status" value="1"/>
</dbReference>
<dbReference type="InterPro" id="IPR003444">
    <property type="entry name" value="MraZ"/>
</dbReference>
<dbReference type="InterPro" id="IPR035644">
    <property type="entry name" value="MraZ_C"/>
</dbReference>
<dbReference type="InterPro" id="IPR020603">
    <property type="entry name" value="MraZ_dom"/>
</dbReference>
<dbReference type="InterPro" id="IPR035642">
    <property type="entry name" value="MraZ_N"/>
</dbReference>
<dbReference type="InterPro" id="IPR038619">
    <property type="entry name" value="MraZ_sf"/>
</dbReference>
<dbReference type="InterPro" id="IPR007159">
    <property type="entry name" value="SpoVT-AbrB_dom"/>
</dbReference>
<dbReference type="InterPro" id="IPR037914">
    <property type="entry name" value="SpoVT-AbrB_sf"/>
</dbReference>
<dbReference type="NCBIfam" id="TIGR00242">
    <property type="entry name" value="division/cell wall cluster transcriptional repressor MraZ"/>
    <property type="match status" value="1"/>
</dbReference>
<dbReference type="PANTHER" id="PTHR34701">
    <property type="entry name" value="TRANSCRIPTIONAL REGULATOR MRAZ"/>
    <property type="match status" value="1"/>
</dbReference>
<dbReference type="PANTHER" id="PTHR34701:SF1">
    <property type="entry name" value="TRANSCRIPTIONAL REGULATOR MRAZ"/>
    <property type="match status" value="1"/>
</dbReference>
<dbReference type="Pfam" id="PF02381">
    <property type="entry name" value="MraZ"/>
    <property type="match status" value="2"/>
</dbReference>
<dbReference type="SUPFAM" id="SSF89447">
    <property type="entry name" value="AbrB/MazE/MraZ-like"/>
    <property type="match status" value="1"/>
</dbReference>
<dbReference type="PROSITE" id="PS51740">
    <property type="entry name" value="SPOVT_ABRB"/>
    <property type="match status" value="2"/>
</dbReference>
<feature type="chain" id="PRO_0000108548" description="Transcriptional regulator MraZ">
    <location>
        <begin position="1"/>
        <end position="144"/>
    </location>
</feature>
<feature type="domain" description="SpoVT-AbrB 1" evidence="2">
    <location>
        <begin position="5"/>
        <end position="47"/>
    </location>
</feature>
<feature type="domain" description="SpoVT-AbrB 2" evidence="2">
    <location>
        <begin position="76"/>
        <end position="121"/>
    </location>
</feature>
<accession>Q72JQ8</accession>
<name>MRAZ_THET2</name>
<keyword id="KW-0963">Cytoplasm</keyword>
<keyword id="KW-0238">DNA-binding</keyword>
<keyword id="KW-0677">Repeat</keyword>
<keyword id="KW-0804">Transcription</keyword>
<keyword id="KW-0805">Transcription regulation</keyword>
<sequence>MPFGEYQYSLDDKGRVVIPAPFRDFVEDGLVLTRGMEGCLYVFPLDRWKKIEEQLVNLPLTDAEARAFVRFFYSGAHKTRMDSASRVLIPPPLRLFAGLKEGGEVVIAGAPGRLEIWSQERWWKAIEEVLAKPPAPEALKGLVG</sequence>
<protein>
    <recommendedName>
        <fullName>Transcriptional regulator MraZ</fullName>
    </recommendedName>
</protein>
<comment type="subunit">
    <text evidence="1">Forms oligomers.</text>
</comment>
<comment type="subcellular location">
    <subcellularLocation>
        <location evidence="1">Cytoplasm</location>
        <location evidence="1">Nucleoid</location>
    </subcellularLocation>
</comment>
<comment type="similarity">
    <text evidence="1">Belongs to the MraZ family.</text>
</comment>
<organism>
    <name type="scientific">Thermus thermophilus (strain ATCC BAA-163 / DSM 7039 / HB27)</name>
    <dbReference type="NCBI Taxonomy" id="262724"/>
    <lineage>
        <taxon>Bacteria</taxon>
        <taxon>Thermotogati</taxon>
        <taxon>Deinococcota</taxon>
        <taxon>Deinococci</taxon>
        <taxon>Thermales</taxon>
        <taxon>Thermaceae</taxon>
        <taxon>Thermus</taxon>
    </lineage>
</organism>